<accession>B5RH72</accession>
<protein>
    <recommendedName>
        <fullName evidence="1">Protein translocase subunit SecA</fullName>
        <ecNumber evidence="1">7.4.2.8</ecNumber>
    </recommendedName>
</protein>
<comment type="function">
    <text evidence="1">Part of the Sec protein translocase complex. Interacts with the SecYEG preprotein conducting channel. Has a central role in coupling the hydrolysis of ATP to the transfer of proteins into and across the cell membrane, serving both as a receptor for the preprotein-SecB complex and as an ATP-driven molecular motor driving the stepwise translocation of polypeptide chains across the membrane.</text>
</comment>
<comment type="catalytic activity">
    <reaction evidence="1">
        <text>ATP + H2O + cellular proteinSide 1 = ADP + phosphate + cellular proteinSide 2.</text>
        <dbReference type="EC" id="7.4.2.8"/>
    </reaction>
</comment>
<comment type="cofactor">
    <cofactor evidence="1">
        <name>Zn(2+)</name>
        <dbReference type="ChEBI" id="CHEBI:29105"/>
    </cofactor>
    <text evidence="1">May bind 1 zinc ion per subunit.</text>
</comment>
<comment type="subunit">
    <text evidence="1">Monomer and homodimer. Part of the essential Sec protein translocation apparatus which comprises SecA, SecYEG and auxiliary proteins SecDF-YajC and YidC.</text>
</comment>
<comment type="subcellular location">
    <subcellularLocation>
        <location evidence="1">Cell inner membrane</location>
        <topology evidence="1">Peripheral membrane protein</topology>
        <orientation evidence="1">Cytoplasmic side</orientation>
    </subcellularLocation>
    <subcellularLocation>
        <location evidence="1">Cytoplasm</location>
    </subcellularLocation>
    <text evidence="1">Distribution is 50-50.</text>
</comment>
<comment type="induction">
    <text evidence="1">Repressed under conditions of excess protein secretion capacity and derepressed when protein secretion becomes limiting. This is regulated by SecM.</text>
</comment>
<comment type="similarity">
    <text evidence="1">Belongs to the SecA family.</text>
</comment>
<feature type="chain" id="PRO_1000145056" description="Protein translocase subunit SecA">
    <location>
        <begin position="1"/>
        <end position="901"/>
    </location>
</feature>
<feature type="binding site" evidence="1">
    <location>
        <position position="87"/>
    </location>
    <ligand>
        <name>ATP</name>
        <dbReference type="ChEBI" id="CHEBI:30616"/>
    </ligand>
</feature>
<feature type="binding site" evidence="1">
    <location>
        <begin position="105"/>
        <end position="109"/>
    </location>
    <ligand>
        <name>ATP</name>
        <dbReference type="ChEBI" id="CHEBI:30616"/>
    </ligand>
</feature>
<feature type="binding site" evidence="1">
    <location>
        <position position="512"/>
    </location>
    <ligand>
        <name>ATP</name>
        <dbReference type="ChEBI" id="CHEBI:30616"/>
    </ligand>
</feature>
<feature type="binding site" evidence="1">
    <location>
        <position position="885"/>
    </location>
    <ligand>
        <name>Zn(2+)</name>
        <dbReference type="ChEBI" id="CHEBI:29105"/>
    </ligand>
</feature>
<feature type="binding site" evidence="1">
    <location>
        <position position="887"/>
    </location>
    <ligand>
        <name>Zn(2+)</name>
        <dbReference type="ChEBI" id="CHEBI:29105"/>
    </ligand>
</feature>
<feature type="binding site" evidence="1">
    <location>
        <position position="896"/>
    </location>
    <ligand>
        <name>Zn(2+)</name>
        <dbReference type="ChEBI" id="CHEBI:29105"/>
    </ligand>
</feature>
<feature type="binding site" evidence="1">
    <location>
        <position position="897"/>
    </location>
    <ligand>
        <name>Zn(2+)</name>
        <dbReference type="ChEBI" id="CHEBI:29105"/>
    </ligand>
</feature>
<proteinExistence type="inferred from homology"/>
<gene>
    <name evidence="1" type="primary">secA</name>
    <name type="ordered locus">SG0137</name>
</gene>
<sequence length="901" mass="101826">MLIKLLTKVFGSRNDRTLRRMRKAVSLINAMEPEMEKLSDDELKAKTNEFRARIEKGESVESLIPEAFAVVREASKRVFGMRHFDVQLLGGMVLNDRCIAEMRTGEGKTLTATLPAYLNALSGKGVHVVTVNDYLAQRDAENNRPLFEFLGMSVGINLPGMPAPAKREAYAADITYGTNNEYGFDYLRDNMAFSPEERVQRKLHYALVDEVDSILIDEARTPLIISGPAEDSSEMYKKVNKIIPHLIRQEKEDSDTFQGEGHFSVDEKARQVNLTERGLVLIEELLVQEGIMDEGESLYSPGNIMLMHHVTAALRAHALFTRDVDYIVKDGEVIIVDEHTGRTMQGRRWSDGLHQAVEAKEGVEIQNENQTLASITFQNYFRLYEKLAGMTGTADTEAFEFSSIYKLDTVVVPTNRPMIRKDLPDLVYMTEAEKIQAIIEDIKERTANGQPVLVGTISIEKSEVVSRELTKAGIKHNVLNAKFHANEAGIVAQAGYPAAVTIATNMAGRGTDIMLGGSWQAEVAALEAPTEEQIAQIKADWQVRHDAVLAAGGLHIIGTERHESRRIDNQLRGRSGRQGDPGSSRFYLSMEDALMRIFASDRVSGMMRKLGMKPGEAIEHPWVTKAIANAQRKVESRNFDIRKQLLEYDDVANDQRRAIYTQRNELLDVSDVSDTINSIREDVFKATIDAYIPPQSLEEMWDIPGLQERLKNDFDLEMPIAEWLDKEPELHEETLRERILAQSIEVYQRKEEVVGAEMMRHFEKGVMLQTLDSLWKEHLAAMDYLRQGIHLRGYAQKDPKQEYKRESFAMFAAMLESLKYEVISTLSKVQVRMPEEVEAMEMQRREEAERLAQMQQLSHQDDDAAVAADLAAQTGERKIGRNDPCPCGSGKKYKQCHGRLS</sequence>
<name>SECA_SALG2</name>
<evidence type="ECO:0000255" key="1">
    <source>
        <dbReference type="HAMAP-Rule" id="MF_01382"/>
    </source>
</evidence>
<keyword id="KW-0067">ATP-binding</keyword>
<keyword id="KW-0997">Cell inner membrane</keyword>
<keyword id="KW-1003">Cell membrane</keyword>
<keyword id="KW-0963">Cytoplasm</keyword>
<keyword id="KW-0472">Membrane</keyword>
<keyword id="KW-0479">Metal-binding</keyword>
<keyword id="KW-0547">Nucleotide-binding</keyword>
<keyword id="KW-0653">Protein transport</keyword>
<keyword id="KW-1278">Translocase</keyword>
<keyword id="KW-0811">Translocation</keyword>
<keyword id="KW-0813">Transport</keyword>
<keyword id="KW-0862">Zinc</keyword>
<reference key="1">
    <citation type="journal article" date="2008" name="Genome Res.">
        <title>Comparative genome analysis of Salmonella enteritidis PT4 and Salmonella gallinarum 287/91 provides insights into evolutionary and host adaptation pathways.</title>
        <authorList>
            <person name="Thomson N.R."/>
            <person name="Clayton D.J."/>
            <person name="Windhorst D."/>
            <person name="Vernikos G."/>
            <person name="Davidson S."/>
            <person name="Churcher C."/>
            <person name="Quail M.A."/>
            <person name="Stevens M."/>
            <person name="Jones M.A."/>
            <person name="Watson M."/>
            <person name="Barron A."/>
            <person name="Layton A."/>
            <person name="Pickard D."/>
            <person name="Kingsley R.A."/>
            <person name="Bignell A."/>
            <person name="Clark L."/>
            <person name="Harris B."/>
            <person name="Ormond D."/>
            <person name="Abdellah Z."/>
            <person name="Brooks K."/>
            <person name="Cherevach I."/>
            <person name="Chillingworth T."/>
            <person name="Woodward J."/>
            <person name="Norberczak H."/>
            <person name="Lord A."/>
            <person name="Arrowsmith C."/>
            <person name="Jagels K."/>
            <person name="Moule S."/>
            <person name="Mungall K."/>
            <person name="Saunders M."/>
            <person name="Whitehead S."/>
            <person name="Chabalgoity J.A."/>
            <person name="Maskell D."/>
            <person name="Humphreys T."/>
            <person name="Roberts M."/>
            <person name="Barrow P.A."/>
            <person name="Dougan G."/>
            <person name="Parkhill J."/>
        </authorList>
    </citation>
    <scope>NUCLEOTIDE SEQUENCE [LARGE SCALE GENOMIC DNA]</scope>
    <source>
        <strain>287/91 / NCTC 13346</strain>
    </source>
</reference>
<organism>
    <name type="scientific">Salmonella gallinarum (strain 287/91 / NCTC 13346)</name>
    <dbReference type="NCBI Taxonomy" id="550538"/>
    <lineage>
        <taxon>Bacteria</taxon>
        <taxon>Pseudomonadati</taxon>
        <taxon>Pseudomonadota</taxon>
        <taxon>Gammaproteobacteria</taxon>
        <taxon>Enterobacterales</taxon>
        <taxon>Enterobacteriaceae</taxon>
        <taxon>Salmonella</taxon>
    </lineage>
</organism>
<dbReference type="EC" id="7.4.2.8" evidence="1"/>
<dbReference type="EMBL" id="AM933173">
    <property type="protein sequence ID" value="CAR36044.1"/>
    <property type="molecule type" value="Genomic_DNA"/>
</dbReference>
<dbReference type="RefSeq" id="WP_000905756.1">
    <property type="nucleotide sequence ID" value="NC_011274.1"/>
</dbReference>
<dbReference type="SMR" id="B5RH72"/>
<dbReference type="KEGG" id="seg:SG0137"/>
<dbReference type="HOGENOM" id="CLU_005314_3_0_6"/>
<dbReference type="Proteomes" id="UP000008321">
    <property type="component" value="Chromosome"/>
</dbReference>
<dbReference type="GO" id="GO:0031522">
    <property type="term" value="C:cell envelope Sec protein transport complex"/>
    <property type="evidence" value="ECO:0007669"/>
    <property type="project" value="TreeGrafter"/>
</dbReference>
<dbReference type="GO" id="GO:0005829">
    <property type="term" value="C:cytosol"/>
    <property type="evidence" value="ECO:0007669"/>
    <property type="project" value="TreeGrafter"/>
</dbReference>
<dbReference type="GO" id="GO:0005886">
    <property type="term" value="C:plasma membrane"/>
    <property type="evidence" value="ECO:0007669"/>
    <property type="project" value="UniProtKB-SubCell"/>
</dbReference>
<dbReference type="GO" id="GO:0005524">
    <property type="term" value="F:ATP binding"/>
    <property type="evidence" value="ECO:0007669"/>
    <property type="project" value="UniProtKB-UniRule"/>
</dbReference>
<dbReference type="GO" id="GO:0046872">
    <property type="term" value="F:metal ion binding"/>
    <property type="evidence" value="ECO:0007669"/>
    <property type="project" value="UniProtKB-KW"/>
</dbReference>
<dbReference type="GO" id="GO:0008564">
    <property type="term" value="F:protein-exporting ATPase activity"/>
    <property type="evidence" value="ECO:0007669"/>
    <property type="project" value="UniProtKB-EC"/>
</dbReference>
<dbReference type="GO" id="GO:0065002">
    <property type="term" value="P:intracellular protein transmembrane transport"/>
    <property type="evidence" value="ECO:0007669"/>
    <property type="project" value="UniProtKB-UniRule"/>
</dbReference>
<dbReference type="GO" id="GO:0017038">
    <property type="term" value="P:protein import"/>
    <property type="evidence" value="ECO:0007669"/>
    <property type="project" value="InterPro"/>
</dbReference>
<dbReference type="GO" id="GO:0006605">
    <property type="term" value="P:protein targeting"/>
    <property type="evidence" value="ECO:0007669"/>
    <property type="project" value="UniProtKB-UniRule"/>
</dbReference>
<dbReference type="GO" id="GO:0043952">
    <property type="term" value="P:protein transport by the Sec complex"/>
    <property type="evidence" value="ECO:0007669"/>
    <property type="project" value="TreeGrafter"/>
</dbReference>
<dbReference type="CDD" id="cd17928">
    <property type="entry name" value="DEXDc_SecA"/>
    <property type="match status" value="1"/>
</dbReference>
<dbReference type="CDD" id="cd18803">
    <property type="entry name" value="SF2_C_secA"/>
    <property type="match status" value="1"/>
</dbReference>
<dbReference type="FunFam" id="1.10.3060.10:FF:000001">
    <property type="entry name" value="Preprotein translocase subunit SecA"/>
    <property type="match status" value="1"/>
</dbReference>
<dbReference type="FunFam" id="3.40.50.300:FF:000081">
    <property type="entry name" value="Preprotein translocase subunit SecA"/>
    <property type="match status" value="1"/>
</dbReference>
<dbReference type="FunFam" id="3.40.50.300:FF:000113">
    <property type="entry name" value="Preprotein translocase subunit SecA"/>
    <property type="match status" value="1"/>
</dbReference>
<dbReference type="FunFam" id="3.90.1440.10:FF:000001">
    <property type="entry name" value="Preprotein translocase subunit SecA"/>
    <property type="match status" value="1"/>
</dbReference>
<dbReference type="Gene3D" id="1.10.3060.10">
    <property type="entry name" value="Helical scaffold and wing domains of SecA"/>
    <property type="match status" value="1"/>
</dbReference>
<dbReference type="Gene3D" id="3.40.50.300">
    <property type="entry name" value="P-loop containing nucleotide triphosphate hydrolases"/>
    <property type="match status" value="2"/>
</dbReference>
<dbReference type="Gene3D" id="3.90.1440.10">
    <property type="entry name" value="SecA, preprotein cross-linking domain"/>
    <property type="match status" value="1"/>
</dbReference>
<dbReference type="HAMAP" id="MF_01382">
    <property type="entry name" value="SecA"/>
    <property type="match status" value="1"/>
</dbReference>
<dbReference type="InterPro" id="IPR014001">
    <property type="entry name" value="Helicase_ATP-bd"/>
</dbReference>
<dbReference type="InterPro" id="IPR027417">
    <property type="entry name" value="P-loop_NTPase"/>
</dbReference>
<dbReference type="InterPro" id="IPR004027">
    <property type="entry name" value="SEC_C_motif"/>
</dbReference>
<dbReference type="InterPro" id="IPR000185">
    <property type="entry name" value="SecA"/>
</dbReference>
<dbReference type="InterPro" id="IPR020937">
    <property type="entry name" value="SecA_CS"/>
</dbReference>
<dbReference type="InterPro" id="IPR011115">
    <property type="entry name" value="SecA_DEAD"/>
</dbReference>
<dbReference type="InterPro" id="IPR014018">
    <property type="entry name" value="SecA_motor_DEAD"/>
</dbReference>
<dbReference type="InterPro" id="IPR011130">
    <property type="entry name" value="SecA_preprotein_X-link_dom"/>
</dbReference>
<dbReference type="InterPro" id="IPR044722">
    <property type="entry name" value="SecA_SF2_C"/>
</dbReference>
<dbReference type="InterPro" id="IPR011116">
    <property type="entry name" value="SecA_Wing/Scaffold"/>
</dbReference>
<dbReference type="InterPro" id="IPR036266">
    <property type="entry name" value="SecA_Wing/Scaffold_sf"/>
</dbReference>
<dbReference type="InterPro" id="IPR036670">
    <property type="entry name" value="SecA_X-link_sf"/>
</dbReference>
<dbReference type="NCBIfam" id="NF009538">
    <property type="entry name" value="PRK12904.1"/>
    <property type="match status" value="1"/>
</dbReference>
<dbReference type="NCBIfam" id="TIGR00963">
    <property type="entry name" value="secA"/>
    <property type="match status" value="1"/>
</dbReference>
<dbReference type="PANTHER" id="PTHR30612:SF0">
    <property type="entry name" value="CHLOROPLAST PROTEIN-TRANSPORTING ATPASE"/>
    <property type="match status" value="1"/>
</dbReference>
<dbReference type="PANTHER" id="PTHR30612">
    <property type="entry name" value="SECA INNER MEMBRANE COMPONENT OF SEC PROTEIN SECRETION SYSTEM"/>
    <property type="match status" value="1"/>
</dbReference>
<dbReference type="Pfam" id="PF21090">
    <property type="entry name" value="P-loop_SecA"/>
    <property type="match status" value="1"/>
</dbReference>
<dbReference type="Pfam" id="PF02810">
    <property type="entry name" value="SEC-C"/>
    <property type="match status" value="1"/>
</dbReference>
<dbReference type="Pfam" id="PF07517">
    <property type="entry name" value="SecA_DEAD"/>
    <property type="match status" value="1"/>
</dbReference>
<dbReference type="Pfam" id="PF01043">
    <property type="entry name" value="SecA_PP_bind"/>
    <property type="match status" value="1"/>
</dbReference>
<dbReference type="Pfam" id="PF07516">
    <property type="entry name" value="SecA_SW"/>
    <property type="match status" value="1"/>
</dbReference>
<dbReference type="PRINTS" id="PR00906">
    <property type="entry name" value="SECA"/>
</dbReference>
<dbReference type="SMART" id="SM00957">
    <property type="entry name" value="SecA_DEAD"/>
    <property type="match status" value="1"/>
</dbReference>
<dbReference type="SMART" id="SM00958">
    <property type="entry name" value="SecA_PP_bind"/>
    <property type="match status" value="1"/>
</dbReference>
<dbReference type="SUPFAM" id="SSF81886">
    <property type="entry name" value="Helical scaffold and wing domains of SecA"/>
    <property type="match status" value="1"/>
</dbReference>
<dbReference type="SUPFAM" id="SSF52540">
    <property type="entry name" value="P-loop containing nucleoside triphosphate hydrolases"/>
    <property type="match status" value="2"/>
</dbReference>
<dbReference type="SUPFAM" id="SSF81767">
    <property type="entry name" value="Pre-protein crosslinking domain of SecA"/>
    <property type="match status" value="1"/>
</dbReference>
<dbReference type="PROSITE" id="PS01312">
    <property type="entry name" value="SECA"/>
    <property type="match status" value="1"/>
</dbReference>
<dbReference type="PROSITE" id="PS51196">
    <property type="entry name" value="SECA_MOTOR_DEAD"/>
    <property type="match status" value="1"/>
</dbReference>